<keyword id="KW-0007">Acetylation</keyword>
<keyword id="KW-0010">Activator</keyword>
<keyword id="KW-0025">Alternative splicing</keyword>
<keyword id="KW-0963">Cytoplasm</keyword>
<keyword id="KW-0903">Direct protein sequencing</keyword>
<keyword id="KW-0238">DNA-binding</keyword>
<keyword id="KW-0472">Membrane</keyword>
<keyword id="KW-0496">Mitochondrion</keyword>
<keyword id="KW-1000">Mitochondrion outer membrane</keyword>
<keyword id="KW-0539">Nucleus</keyword>
<keyword id="KW-0597">Phosphoprotein</keyword>
<keyword id="KW-1185">Reference proteome</keyword>
<keyword id="KW-0804">Transcription</keyword>
<keyword id="KW-0805">Transcription regulation</keyword>
<name>MLXIP_MOUSE</name>
<comment type="function">
    <text evidence="1 4 6 7">Binds DNA as a heterodimer with MLX/TCFL4 and activates transcription. Binds to the canonical E box sequence 5'-CACGTG-3'. Plays a role in transcriptional activation of glycolytic target genes. Involved in glucose-responsive gene regulation (By similarity) (PubMed:11073985, PubMed:16644671). Regulates transcription in response to changes in cellular carbohydrate abundance such as occurs during fasting to feeding metabolic transition. Refeeding stimulates MLXIPL/ChREBP transcription factor, leading to increased BCKDK to PPM1K expression ratio, phosphorylation and activation of ACLY that ultimately results in the generation of malonyl-CoA and oxaloacetate immediate substrates of de novo lipogenesis and gluconeogenesis, respectively (PubMed:29779826).</text>
</comment>
<comment type="subunit">
    <text evidence="4">Efficient DNA binding requires dimerization with another bHLH protein. Binds DNA as a homodimer or a heterodimer with MLX/TCFL4.</text>
</comment>
<comment type="subcellular location">
    <subcellularLocation>
        <location evidence="4">Cytoplasm</location>
    </subcellularLocation>
    <subcellularLocation>
        <location evidence="2 4">Nucleus</location>
    </subcellularLocation>
    <subcellularLocation>
        <location evidence="4">Mitochondrion outer membrane</location>
    </subcellularLocation>
    <text evidence="1 4">Predominantly cytoplasmic but shuttles between cytoplasm and nucleus when associated with MLX. Also associates with the outer mitochondrial membrane and may shuttle between the outer mitochondrial membrane and the nucleus.</text>
</comment>
<comment type="alternative products">
    <event type="alternative splicing"/>
    <isoform>
        <id>Q2VPU4-1</id>
        <name evidence="6">1</name>
        <sequence type="displayed"/>
    </isoform>
    <isoform>
        <id>Q2VPU4-2</id>
        <name evidence="5">2</name>
        <sequence type="described" ref="VSP_052505 VSP_052506"/>
    </isoform>
</comment>
<comment type="developmental stage">
    <text evidence="4">Broadly expressed from 9.5 dpc to at least 15 dpc, with slightly elevated levels in the developing nervous system.</text>
</comment>
<proteinExistence type="evidence at protein level"/>
<reference evidence="9 12" key="1">
    <citation type="journal article" date="2006" name="Diabetes">
        <title>Glucose-dependent transcriptional regulation by an evolutionarily conserved glucose-sensing module.</title>
        <authorList>
            <person name="Li M.V."/>
            <person name="Chang B."/>
            <person name="Imamura M."/>
            <person name="Poungvarin N."/>
            <person name="Chan L."/>
        </authorList>
    </citation>
    <scope>NUCLEOTIDE SEQUENCE [MRNA] (ISOFORM 1)</scope>
    <scope>FUNCTION</scope>
    <source>
        <strain evidence="12">C57BL/6J</strain>
        <tissue evidence="12">Skeletal muscle</tissue>
    </source>
</reference>
<reference evidence="9 13" key="2">
    <citation type="journal article" date="2005" name="Science">
        <title>The transcriptional landscape of the mammalian genome.</title>
        <authorList>
            <person name="Carninci P."/>
            <person name="Kasukawa T."/>
            <person name="Katayama S."/>
            <person name="Gough J."/>
            <person name="Frith M.C."/>
            <person name="Maeda N."/>
            <person name="Oyama R."/>
            <person name="Ravasi T."/>
            <person name="Lenhard B."/>
            <person name="Wells C."/>
            <person name="Kodzius R."/>
            <person name="Shimokawa K."/>
            <person name="Bajic V.B."/>
            <person name="Brenner S.E."/>
            <person name="Batalov S."/>
            <person name="Forrest A.R."/>
            <person name="Zavolan M."/>
            <person name="Davis M.J."/>
            <person name="Wilming L.G."/>
            <person name="Aidinis V."/>
            <person name="Allen J.E."/>
            <person name="Ambesi-Impiombato A."/>
            <person name="Apweiler R."/>
            <person name="Aturaliya R.N."/>
            <person name="Bailey T.L."/>
            <person name="Bansal M."/>
            <person name="Baxter L."/>
            <person name="Beisel K.W."/>
            <person name="Bersano T."/>
            <person name="Bono H."/>
            <person name="Chalk A.M."/>
            <person name="Chiu K.P."/>
            <person name="Choudhary V."/>
            <person name="Christoffels A."/>
            <person name="Clutterbuck D.R."/>
            <person name="Crowe M.L."/>
            <person name="Dalla E."/>
            <person name="Dalrymple B.P."/>
            <person name="de Bono B."/>
            <person name="Della Gatta G."/>
            <person name="di Bernardo D."/>
            <person name="Down T."/>
            <person name="Engstrom P."/>
            <person name="Fagiolini M."/>
            <person name="Faulkner G."/>
            <person name="Fletcher C.F."/>
            <person name="Fukushima T."/>
            <person name="Furuno M."/>
            <person name="Futaki S."/>
            <person name="Gariboldi M."/>
            <person name="Georgii-Hemming P."/>
            <person name="Gingeras T.R."/>
            <person name="Gojobori T."/>
            <person name="Green R.E."/>
            <person name="Gustincich S."/>
            <person name="Harbers M."/>
            <person name="Hayashi Y."/>
            <person name="Hensch T.K."/>
            <person name="Hirokawa N."/>
            <person name="Hill D."/>
            <person name="Huminiecki L."/>
            <person name="Iacono M."/>
            <person name="Ikeo K."/>
            <person name="Iwama A."/>
            <person name="Ishikawa T."/>
            <person name="Jakt M."/>
            <person name="Kanapin A."/>
            <person name="Katoh M."/>
            <person name="Kawasawa Y."/>
            <person name="Kelso J."/>
            <person name="Kitamura H."/>
            <person name="Kitano H."/>
            <person name="Kollias G."/>
            <person name="Krishnan S.P."/>
            <person name="Kruger A."/>
            <person name="Kummerfeld S.K."/>
            <person name="Kurochkin I.V."/>
            <person name="Lareau L.F."/>
            <person name="Lazarevic D."/>
            <person name="Lipovich L."/>
            <person name="Liu J."/>
            <person name="Liuni S."/>
            <person name="McWilliam S."/>
            <person name="Madan Babu M."/>
            <person name="Madera M."/>
            <person name="Marchionni L."/>
            <person name="Matsuda H."/>
            <person name="Matsuzawa S."/>
            <person name="Miki H."/>
            <person name="Mignone F."/>
            <person name="Miyake S."/>
            <person name="Morris K."/>
            <person name="Mottagui-Tabar S."/>
            <person name="Mulder N."/>
            <person name="Nakano N."/>
            <person name="Nakauchi H."/>
            <person name="Ng P."/>
            <person name="Nilsson R."/>
            <person name="Nishiguchi S."/>
            <person name="Nishikawa S."/>
            <person name="Nori F."/>
            <person name="Ohara O."/>
            <person name="Okazaki Y."/>
            <person name="Orlando V."/>
            <person name="Pang K.C."/>
            <person name="Pavan W.J."/>
            <person name="Pavesi G."/>
            <person name="Pesole G."/>
            <person name="Petrovsky N."/>
            <person name="Piazza S."/>
            <person name="Reed J."/>
            <person name="Reid J.F."/>
            <person name="Ring B.Z."/>
            <person name="Ringwald M."/>
            <person name="Rost B."/>
            <person name="Ruan Y."/>
            <person name="Salzberg S.L."/>
            <person name="Sandelin A."/>
            <person name="Schneider C."/>
            <person name="Schoenbach C."/>
            <person name="Sekiguchi K."/>
            <person name="Semple C.A."/>
            <person name="Seno S."/>
            <person name="Sessa L."/>
            <person name="Sheng Y."/>
            <person name="Shibata Y."/>
            <person name="Shimada H."/>
            <person name="Shimada K."/>
            <person name="Silva D."/>
            <person name="Sinclair B."/>
            <person name="Sperling S."/>
            <person name="Stupka E."/>
            <person name="Sugiura K."/>
            <person name="Sultana R."/>
            <person name="Takenaka Y."/>
            <person name="Taki K."/>
            <person name="Tammoja K."/>
            <person name="Tan S.L."/>
            <person name="Tang S."/>
            <person name="Taylor M.S."/>
            <person name="Tegner J."/>
            <person name="Teichmann S.A."/>
            <person name="Ueda H.R."/>
            <person name="van Nimwegen E."/>
            <person name="Verardo R."/>
            <person name="Wei C.L."/>
            <person name="Yagi K."/>
            <person name="Yamanishi H."/>
            <person name="Zabarovsky E."/>
            <person name="Zhu S."/>
            <person name="Zimmer A."/>
            <person name="Hide W."/>
            <person name="Bult C."/>
            <person name="Grimmond S.M."/>
            <person name="Teasdale R.D."/>
            <person name="Liu E.T."/>
            <person name="Brusic V."/>
            <person name="Quackenbush J."/>
            <person name="Wahlestedt C."/>
            <person name="Mattick J.S."/>
            <person name="Hume D.A."/>
            <person name="Kai C."/>
            <person name="Sasaki D."/>
            <person name="Tomaru Y."/>
            <person name="Fukuda S."/>
            <person name="Kanamori-Katayama M."/>
            <person name="Suzuki M."/>
            <person name="Aoki J."/>
            <person name="Arakawa T."/>
            <person name="Iida J."/>
            <person name="Imamura K."/>
            <person name="Itoh M."/>
            <person name="Kato T."/>
            <person name="Kawaji H."/>
            <person name="Kawagashira N."/>
            <person name="Kawashima T."/>
            <person name="Kojima M."/>
            <person name="Kondo S."/>
            <person name="Konno H."/>
            <person name="Nakano K."/>
            <person name="Ninomiya N."/>
            <person name="Nishio T."/>
            <person name="Okada M."/>
            <person name="Plessy C."/>
            <person name="Shibata K."/>
            <person name="Shiraki T."/>
            <person name="Suzuki S."/>
            <person name="Tagami M."/>
            <person name="Waki K."/>
            <person name="Watahiki A."/>
            <person name="Okamura-Oho Y."/>
            <person name="Suzuki H."/>
            <person name="Kawai J."/>
            <person name="Hayashizaki Y."/>
        </authorList>
    </citation>
    <scope>NUCLEOTIDE SEQUENCE [LARGE SCALE MRNA] (ISOFORM 2)</scope>
    <source>
        <strain evidence="13">C57BL/6J</strain>
        <tissue evidence="13">Cerebellum</tissue>
    </source>
</reference>
<reference evidence="9 11" key="3">
    <citation type="submission" date="2009-01" db="UniProtKB">
        <authorList>
            <person name="Lubec G."/>
            <person name="Sunyer B."/>
            <person name="Chen W.-Q."/>
        </authorList>
    </citation>
    <scope>PROTEIN SEQUENCE OF 215-220</scope>
    <scope>IDENTIFICATION BY MASS SPECTROMETRY</scope>
    <source>
        <strain>OF1</strain>
        <tissue>Hippocampus</tissue>
    </source>
</reference>
<reference evidence="9 10" key="4">
    <citation type="journal article" date="2004" name="Genome Res.">
        <title>The status, quality, and expansion of the NIH full-length cDNA project: the Mammalian Gene Collection (MGC).</title>
        <authorList>
            <consortium name="The MGC Project Team"/>
        </authorList>
    </citation>
    <scope>NUCLEOTIDE SEQUENCE [LARGE SCALE MRNA] OF 473-917 (ISOFORM 1)</scope>
    <source>
        <strain evidence="10">C57BL/6J</strain>
        <tissue evidence="10">Brain</tissue>
    </source>
</reference>
<reference evidence="9 11" key="5">
    <citation type="submission" date="2000-05" db="EMBL/GenBank/DDBJ databases">
        <title>Mir a new partner for the Max-like protein, Mlx.</title>
        <authorList>
            <person name="Merla G."/>
            <person name="Cairo S."/>
            <person name="Reymond A."/>
        </authorList>
    </citation>
    <scope>NUCLEOTIDE SEQUENCE [MRNA] OF 499-917 (ISOFORM 1)</scope>
    <source>
        <strain evidence="11">Swiss Webster / NIH</strain>
    </source>
</reference>
<reference evidence="9" key="6">
    <citation type="journal article" date="2000" name="Mol. Cell. Biol.">
        <title>MondoA, a novel basic helix-loop-helix-leucine zipper transcriptional activator that constitutes a positive branch of a max-like network.</title>
        <authorList>
            <person name="Billin A.N."/>
            <person name="Eilers A.L."/>
            <person name="Coulter K.L."/>
            <person name="Logan J.S."/>
            <person name="Ayer D.E."/>
        </authorList>
    </citation>
    <scope>FUNCTION</scope>
    <scope>SUBUNIT</scope>
    <scope>INTERACTION WITH MLX</scope>
    <scope>SUBCELLULAR LOCATION</scope>
    <scope>DEVELOPMENTAL STAGE</scope>
</reference>
<reference key="7">
    <citation type="journal article" date="2010" name="Cell">
        <title>A tissue-specific atlas of mouse protein phosphorylation and expression.</title>
        <authorList>
            <person name="Huttlin E.L."/>
            <person name="Jedrychowski M.P."/>
            <person name="Elias J.E."/>
            <person name="Goswami T."/>
            <person name="Rad R."/>
            <person name="Beausoleil S.A."/>
            <person name="Villen J."/>
            <person name="Haas W."/>
            <person name="Sowa M.E."/>
            <person name="Gygi S.P."/>
        </authorList>
    </citation>
    <scope>PHOSPHORYLATION [LARGE SCALE ANALYSIS] AT SER-39</scope>
    <scope>IDENTIFICATION BY MASS SPECTROMETRY [LARGE SCALE ANALYSIS]</scope>
    <source>
        <tissue>Kidney</tissue>
        <tissue>Pancreas</tissue>
        <tissue>Spleen</tissue>
    </source>
</reference>
<reference key="8">
    <citation type="journal article" date="2018" name="Cell Metab.">
        <title>The BCKDH Kinase and Phosphatase Integrate BCAA and Lipid Metabolism via Regulation of ATP-Citrate Lyase.</title>
        <authorList>
            <person name="White P.J."/>
            <person name="McGarrah R.W."/>
            <person name="Grimsrud P.A."/>
            <person name="Tso S.C."/>
            <person name="Yang W.H."/>
            <person name="Haldeman J.M."/>
            <person name="Grenier-Larouche T."/>
            <person name="An J."/>
            <person name="Lapworth A.L."/>
            <person name="Astapova I."/>
            <person name="Hannou S.A."/>
            <person name="George T."/>
            <person name="Arlotto M."/>
            <person name="Olson L.B."/>
            <person name="Lai M."/>
            <person name="Zhang G.F."/>
            <person name="Ilkayeva O."/>
            <person name="Herman M.A."/>
            <person name="Wynn R.M."/>
            <person name="Chuang D.T."/>
            <person name="Newgard C.B."/>
        </authorList>
    </citation>
    <scope>FUNCTION</scope>
</reference>
<gene>
    <name evidence="14" type="primary">Mlxip</name>
    <name evidence="11" type="synonym">Mir</name>
</gene>
<organism>
    <name type="scientific">Mus musculus</name>
    <name type="common">Mouse</name>
    <dbReference type="NCBI Taxonomy" id="10090"/>
    <lineage>
        <taxon>Eukaryota</taxon>
        <taxon>Metazoa</taxon>
        <taxon>Chordata</taxon>
        <taxon>Craniata</taxon>
        <taxon>Vertebrata</taxon>
        <taxon>Euteleostomi</taxon>
        <taxon>Mammalia</taxon>
        <taxon>Eutheria</taxon>
        <taxon>Euarchontoglires</taxon>
        <taxon>Glires</taxon>
        <taxon>Rodentia</taxon>
        <taxon>Myomorpha</taxon>
        <taxon>Muroidea</taxon>
        <taxon>Muridae</taxon>
        <taxon>Murinae</taxon>
        <taxon>Mus</taxon>
        <taxon>Mus</taxon>
    </lineage>
</organism>
<feature type="initiator methionine" description="Removed" evidence="1">
    <location>
        <position position="1"/>
    </location>
</feature>
<feature type="chain" id="PRO_0000298764" description="MLX-interacting protein">
    <location>
        <begin position="2"/>
        <end position="917"/>
    </location>
</feature>
<feature type="domain" description="bHLH" evidence="2">
    <location>
        <begin position="717"/>
        <end position="767"/>
    </location>
</feature>
<feature type="region of interest" description="Disordered" evidence="3">
    <location>
        <begin position="1"/>
        <end position="72"/>
    </location>
</feature>
<feature type="region of interest" description="Required for cytoplasmic localization" evidence="1">
    <location>
        <begin position="73"/>
        <end position="327"/>
    </location>
</feature>
<feature type="region of interest" description="Transactivation domain" evidence="4">
    <location>
        <begin position="322"/>
        <end position="445"/>
    </location>
</feature>
<feature type="region of interest" description="Disordered" evidence="3">
    <location>
        <begin position="347"/>
        <end position="402"/>
    </location>
</feature>
<feature type="region of interest" description="Disordered" evidence="3">
    <location>
        <begin position="632"/>
        <end position="711"/>
    </location>
</feature>
<feature type="region of interest" description="Leucine-zipper">
    <location>
        <begin position="767"/>
        <end position="788"/>
    </location>
</feature>
<feature type="region of interest" description="Mediates heterotypic interactions between MLXIP and MLX and is required for cytoplasmic localization" evidence="1">
    <location>
        <begin position="830"/>
        <end position="879"/>
    </location>
</feature>
<feature type="region of interest" description="Disordered" evidence="3">
    <location>
        <begin position="897"/>
        <end position="917"/>
    </location>
</feature>
<feature type="compositionally biased region" description="Acidic residues" evidence="3">
    <location>
        <begin position="27"/>
        <end position="37"/>
    </location>
</feature>
<feature type="compositionally biased region" description="Low complexity" evidence="3">
    <location>
        <begin position="47"/>
        <end position="57"/>
    </location>
</feature>
<feature type="compositionally biased region" description="Polar residues" evidence="3">
    <location>
        <begin position="378"/>
        <end position="388"/>
    </location>
</feature>
<feature type="compositionally biased region" description="Low complexity" evidence="3">
    <location>
        <begin position="632"/>
        <end position="643"/>
    </location>
</feature>
<feature type="compositionally biased region" description="Polar residues" evidence="3">
    <location>
        <begin position="670"/>
        <end position="685"/>
    </location>
</feature>
<feature type="compositionally biased region" description="Low complexity" evidence="3">
    <location>
        <begin position="686"/>
        <end position="704"/>
    </location>
</feature>
<feature type="modified residue" description="N-acetylalanine" evidence="1">
    <location>
        <position position="2"/>
    </location>
</feature>
<feature type="modified residue" description="Phosphoserine" evidence="1">
    <location>
        <position position="9"/>
    </location>
</feature>
<feature type="modified residue" description="Phosphoserine" evidence="1">
    <location>
        <position position="33"/>
    </location>
</feature>
<feature type="modified residue" description="Phosphoserine" evidence="15">
    <location>
        <position position="39"/>
    </location>
</feature>
<feature type="modified residue" description="Phosphoserine" evidence="1">
    <location>
        <position position="667"/>
    </location>
</feature>
<feature type="splice variant" id="VSP_052505" description="In isoform 2." evidence="8">
    <original>AAFSGQPQKVIMTSAPLKREGILASTVSPSNV</original>
    <variation>GELVGGVVSQNCLGSNVSLSLRLYIGKNSLPT</variation>
    <location>
        <begin position="583"/>
        <end position="614"/>
    </location>
</feature>
<feature type="splice variant" id="VSP_052506" description="In isoform 2." evidence="8">
    <location>
        <begin position="615"/>
        <end position="917"/>
    </location>
</feature>
<feature type="sequence conflict" description="In Ref. 2; BAC33069." evidence="9" ref="2">
    <original>R</original>
    <variation>K</variation>
    <location>
        <position position="179"/>
    </location>
</feature>
<protein>
    <recommendedName>
        <fullName>MLX-interacting protein</fullName>
    </recommendedName>
    <alternativeName>
        <fullName>Transcriptional activator MondoA</fullName>
    </alternativeName>
</protein>
<accession>Q2VPU4</accession>
<accession>Q6NXJ4</accession>
<accession>Q6P9J8</accession>
<accession>Q8C8C6</accession>
<accession>Q8VI53</accession>
<dbReference type="EMBL" id="AY968204">
    <property type="protein sequence ID" value="AAY41069.1"/>
    <property type="molecule type" value="mRNA"/>
</dbReference>
<dbReference type="EMBL" id="AK047475">
    <property type="protein sequence ID" value="BAC33069.1"/>
    <property type="molecule type" value="mRNA"/>
</dbReference>
<dbReference type="EMBL" id="BC060733">
    <property type="protein sequence ID" value="AAH60733.1"/>
    <property type="molecule type" value="mRNA"/>
</dbReference>
<dbReference type="EMBL" id="BC067045">
    <property type="protein sequence ID" value="AAH67045.1"/>
    <property type="molecule type" value="mRNA"/>
</dbReference>
<dbReference type="EMBL" id="AF265663">
    <property type="protein sequence ID" value="AAL55724.1"/>
    <property type="molecule type" value="mRNA"/>
</dbReference>
<dbReference type="CCDS" id="CCDS19662.1">
    <molecule id="Q2VPU4-1"/>
</dbReference>
<dbReference type="CCDS" id="CCDS39268.1">
    <molecule id="Q2VPU4-2"/>
</dbReference>
<dbReference type="RefSeq" id="NP_598678.2">
    <property type="nucleotide sequence ID" value="NM_133917.3"/>
</dbReference>
<dbReference type="RefSeq" id="NP_808250.1">
    <property type="nucleotide sequence ID" value="NM_177582.3"/>
</dbReference>
<dbReference type="SMR" id="Q2VPU4"/>
<dbReference type="BioGRID" id="228948">
    <property type="interactions" value="3"/>
</dbReference>
<dbReference type="FunCoup" id="Q2VPU4">
    <property type="interactions" value="2626"/>
</dbReference>
<dbReference type="STRING" id="10090.ENSMUSP00000064943"/>
<dbReference type="GlyGen" id="Q2VPU4">
    <property type="glycosylation" value="3 sites, 1 O-linked glycan (3 sites)"/>
</dbReference>
<dbReference type="iPTMnet" id="Q2VPU4"/>
<dbReference type="PhosphoSitePlus" id="Q2VPU4"/>
<dbReference type="PaxDb" id="10090-ENSMUSP00000064943"/>
<dbReference type="ProteomicsDB" id="295682">
    <molecule id="Q2VPU4-1"/>
</dbReference>
<dbReference type="ProteomicsDB" id="295683">
    <molecule id="Q2VPU4-2"/>
</dbReference>
<dbReference type="Pumba" id="Q2VPU4"/>
<dbReference type="DNASU" id="208104"/>
<dbReference type="GeneID" id="208104"/>
<dbReference type="KEGG" id="mmu:208104"/>
<dbReference type="AGR" id="MGI:2141183"/>
<dbReference type="CTD" id="22877"/>
<dbReference type="MGI" id="MGI:2141183">
    <property type="gene designation" value="Mlxip"/>
</dbReference>
<dbReference type="eggNOG" id="KOG3582">
    <property type="taxonomic scope" value="Eukaryota"/>
</dbReference>
<dbReference type="InParanoid" id="Q2VPU4"/>
<dbReference type="OrthoDB" id="6022628at2759"/>
<dbReference type="PhylomeDB" id="Q2VPU4"/>
<dbReference type="BioGRID-ORCS" id="208104">
    <property type="hits" value="2 hits in 79 CRISPR screens"/>
</dbReference>
<dbReference type="ChiTaRS" id="Mlxip">
    <property type="organism name" value="mouse"/>
</dbReference>
<dbReference type="PRO" id="PR:Q2VPU4"/>
<dbReference type="Proteomes" id="UP000000589">
    <property type="component" value="Unplaced"/>
</dbReference>
<dbReference type="RNAct" id="Q2VPU4">
    <property type="molecule type" value="protein"/>
</dbReference>
<dbReference type="GO" id="GO:0005737">
    <property type="term" value="C:cytoplasm"/>
    <property type="evidence" value="ECO:0000314"/>
    <property type="project" value="MGI"/>
</dbReference>
<dbReference type="GO" id="GO:0005741">
    <property type="term" value="C:mitochondrial outer membrane"/>
    <property type="evidence" value="ECO:0007669"/>
    <property type="project" value="UniProtKB-SubCell"/>
</dbReference>
<dbReference type="GO" id="GO:0005634">
    <property type="term" value="C:nucleus"/>
    <property type="evidence" value="ECO:0000314"/>
    <property type="project" value="MGI"/>
</dbReference>
<dbReference type="GO" id="GO:0003677">
    <property type="term" value="F:DNA binding"/>
    <property type="evidence" value="ECO:0007669"/>
    <property type="project" value="UniProtKB-KW"/>
</dbReference>
<dbReference type="GO" id="GO:0046983">
    <property type="term" value="F:protein dimerization activity"/>
    <property type="evidence" value="ECO:0007669"/>
    <property type="project" value="InterPro"/>
</dbReference>
<dbReference type="GO" id="GO:0006913">
    <property type="term" value="P:nucleocytoplasmic transport"/>
    <property type="evidence" value="ECO:0000314"/>
    <property type="project" value="MGI"/>
</dbReference>
<dbReference type="CDD" id="cd21772">
    <property type="entry name" value="NES2-NLS_MLXIP"/>
    <property type="match status" value="1"/>
</dbReference>
<dbReference type="FunFam" id="4.10.280.10:FF:000028">
    <property type="entry name" value="MLX interacting protein like"/>
    <property type="match status" value="1"/>
</dbReference>
<dbReference type="Gene3D" id="4.10.280.10">
    <property type="entry name" value="Helix-loop-helix DNA-binding domain"/>
    <property type="match status" value="1"/>
</dbReference>
<dbReference type="InterPro" id="IPR011598">
    <property type="entry name" value="bHLH_dom"/>
</dbReference>
<dbReference type="InterPro" id="IPR036638">
    <property type="entry name" value="HLH_DNA-bd_sf"/>
</dbReference>
<dbReference type="InterPro" id="IPR052207">
    <property type="entry name" value="Max-like/E-box_TFs"/>
</dbReference>
<dbReference type="PANTHER" id="PTHR15741">
    <property type="entry name" value="BASIC HELIX-LOOP-HELIX ZIP TRANSCRIPTION FACTOR"/>
    <property type="match status" value="1"/>
</dbReference>
<dbReference type="PANTHER" id="PTHR15741:SF23">
    <property type="entry name" value="MLX-INTERACTING PROTEIN"/>
    <property type="match status" value="1"/>
</dbReference>
<dbReference type="Pfam" id="PF00010">
    <property type="entry name" value="HLH"/>
    <property type="match status" value="1"/>
</dbReference>
<dbReference type="SMART" id="SM00353">
    <property type="entry name" value="HLH"/>
    <property type="match status" value="1"/>
</dbReference>
<dbReference type="SUPFAM" id="SSF47459">
    <property type="entry name" value="HLH, helix-loop-helix DNA-binding domain"/>
    <property type="match status" value="1"/>
</dbReference>
<dbReference type="PROSITE" id="PS50888">
    <property type="entry name" value="BHLH"/>
    <property type="match status" value="1"/>
</dbReference>
<sequence>MAADVFMCSPRRPRSRGRSVLLKPQVPEDDDDSDTDEPSPPPPSGVATSARAHASAAPLPPRAGPGREEPPRRQQIIHSGHFMVSSPHREHPPKKGYDFDTVNKQTCQTYSFGKTSSCHLSIDASLTKLFECMTLAYSGKLVSPKWKNFKGLKLQWRDKIRLNNAIWRAWYMQYLEKRRNPVCHFVTPLDGSVDVDEHRRPEAITTEGKYWKSRIEIVIREYHKWRTYFKKRLQQHKDEDLSSLAQDDDMLYWHKHGDGWKTPVPMEEDSLLDTDMLMSEFSDTLFSTLSSHQPVAWPNPREIAHLGNADMIQPGLIPLQPNLDFMDTFEPFQDLFSSSRSIFGSMLPPPSSLPAADPSSPPSQGNILPNTALPPASLPNSLITSSAAPSLDPTEGQGCERTSQTVDPFIQPADFGPSEPPLSVPQPFLPVFTMTLLSPGPAPAPVPTALPLVPSPAPTLNPPTPPAFLQPQKFAGVSKSTPVITHTASATLTHDASATTFSQNQGLVITAHHPTPSSSPCALALSPVPQPPAVGPPQPHLTFIHPKPVSLTGVRHKQPPKIVPAPKPEPVSLVLKNACIAPAAFSGQPQKVIMTSAPLKREGILASTVSPSNVVIASAAITRASGVTEFLSHSTSSQPSPVSRLFSPSTVQDSLVKGEQVSLHGGSPQVPATGSSRDCPNSGQASPCPSEQSPSPQSPQNNCSGKSTDPKNVAALKNRQKHISAEQKRRFNIRMGFNTLNSLISNNSKQTSHAITLQKTMEYITKLQQERMQMQEEARRLREEIEELNTTIISCQQLLPATGVPVNCRQLDHMRDMFDEYVKSRTLQNWKFWIFSMIIKPLFESFKGMVSTSSLEEFHRTALSWLDQHCSLPVLRPMVLSTLRQLSTTTSILTDPSQLPEQASEAVTRMGKRSGES</sequence>
<evidence type="ECO:0000250" key="1">
    <source>
        <dbReference type="UniProtKB" id="Q9HAP2"/>
    </source>
</evidence>
<evidence type="ECO:0000255" key="2">
    <source>
        <dbReference type="PROSITE-ProRule" id="PRU00981"/>
    </source>
</evidence>
<evidence type="ECO:0000256" key="3">
    <source>
        <dbReference type="SAM" id="MobiDB-lite"/>
    </source>
</evidence>
<evidence type="ECO:0000269" key="4">
    <source>
    </source>
</evidence>
<evidence type="ECO:0000269" key="5">
    <source>
    </source>
</evidence>
<evidence type="ECO:0000269" key="6">
    <source>
    </source>
</evidence>
<evidence type="ECO:0000269" key="7">
    <source>
    </source>
</evidence>
<evidence type="ECO:0000303" key="8">
    <source>
    </source>
</evidence>
<evidence type="ECO:0000305" key="9"/>
<evidence type="ECO:0000312" key="10">
    <source>
        <dbReference type="EMBL" id="AAH67045.1"/>
    </source>
</evidence>
<evidence type="ECO:0000312" key="11">
    <source>
        <dbReference type="EMBL" id="AAL55724.1"/>
    </source>
</evidence>
<evidence type="ECO:0000312" key="12">
    <source>
        <dbReference type="EMBL" id="AAY41069.1"/>
    </source>
</evidence>
<evidence type="ECO:0000312" key="13">
    <source>
        <dbReference type="EMBL" id="BAC33069.1"/>
    </source>
</evidence>
<evidence type="ECO:0000312" key="14">
    <source>
        <dbReference type="MGI" id="MGI:2141183"/>
    </source>
</evidence>
<evidence type="ECO:0007744" key="15">
    <source>
    </source>
</evidence>